<accession>P67682</accession>
<accession>Q99UP7</accession>
<feature type="chain" id="PRO_0000171515" description="Small ribosomal subunit biogenesis GTPase RsgA">
    <location>
        <begin position="1"/>
        <end position="291"/>
    </location>
</feature>
<feature type="domain" description="CP-type G" evidence="2">
    <location>
        <begin position="63"/>
        <end position="221"/>
    </location>
</feature>
<feature type="binding site" evidence="1">
    <location>
        <begin position="112"/>
        <end position="115"/>
    </location>
    <ligand>
        <name>GTP</name>
        <dbReference type="ChEBI" id="CHEBI:37565"/>
    </ligand>
</feature>
<feature type="binding site" evidence="1">
    <location>
        <begin position="164"/>
        <end position="172"/>
    </location>
    <ligand>
        <name>GTP</name>
        <dbReference type="ChEBI" id="CHEBI:37565"/>
    </ligand>
</feature>
<feature type="binding site" evidence="1">
    <location>
        <position position="245"/>
    </location>
    <ligand>
        <name>Zn(2+)</name>
        <dbReference type="ChEBI" id="CHEBI:29105"/>
    </ligand>
</feature>
<feature type="binding site" evidence="1">
    <location>
        <position position="250"/>
    </location>
    <ligand>
        <name>Zn(2+)</name>
        <dbReference type="ChEBI" id="CHEBI:29105"/>
    </ligand>
</feature>
<feature type="binding site" evidence="1">
    <location>
        <position position="252"/>
    </location>
    <ligand>
        <name>Zn(2+)</name>
        <dbReference type="ChEBI" id="CHEBI:29105"/>
    </ligand>
</feature>
<feature type="binding site" evidence="1">
    <location>
        <position position="258"/>
    </location>
    <ligand>
        <name>Zn(2+)</name>
        <dbReference type="ChEBI" id="CHEBI:29105"/>
    </ligand>
</feature>
<organism>
    <name type="scientific">Staphylococcus aureus (strain N315)</name>
    <dbReference type="NCBI Taxonomy" id="158879"/>
    <lineage>
        <taxon>Bacteria</taxon>
        <taxon>Bacillati</taxon>
        <taxon>Bacillota</taxon>
        <taxon>Bacilli</taxon>
        <taxon>Bacillales</taxon>
        <taxon>Staphylococcaceae</taxon>
        <taxon>Staphylococcus</taxon>
    </lineage>
</organism>
<gene>
    <name evidence="1" type="primary">rsgA</name>
    <name type="ordered locus">SA1064</name>
</gene>
<reference key="1">
    <citation type="journal article" date="2001" name="Lancet">
        <title>Whole genome sequencing of meticillin-resistant Staphylococcus aureus.</title>
        <authorList>
            <person name="Kuroda M."/>
            <person name="Ohta T."/>
            <person name="Uchiyama I."/>
            <person name="Baba T."/>
            <person name="Yuzawa H."/>
            <person name="Kobayashi I."/>
            <person name="Cui L."/>
            <person name="Oguchi A."/>
            <person name="Aoki K."/>
            <person name="Nagai Y."/>
            <person name="Lian J.-Q."/>
            <person name="Ito T."/>
            <person name="Kanamori M."/>
            <person name="Matsumaru H."/>
            <person name="Maruyama A."/>
            <person name="Murakami H."/>
            <person name="Hosoyama A."/>
            <person name="Mizutani-Ui Y."/>
            <person name="Takahashi N.K."/>
            <person name="Sawano T."/>
            <person name="Inoue R."/>
            <person name="Kaito C."/>
            <person name="Sekimizu K."/>
            <person name="Hirakawa H."/>
            <person name="Kuhara S."/>
            <person name="Goto S."/>
            <person name="Yabuzaki J."/>
            <person name="Kanehisa M."/>
            <person name="Yamashita A."/>
            <person name="Oshima K."/>
            <person name="Furuya K."/>
            <person name="Yoshino C."/>
            <person name="Shiba T."/>
            <person name="Hattori M."/>
            <person name="Ogasawara N."/>
            <person name="Hayashi H."/>
            <person name="Hiramatsu K."/>
        </authorList>
    </citation>
    <scope>NUCLEOTIDE SEQUENCE [LARGE SCALE GENOMIC DNA]</scope>
    <source>
        <strain>N315</strain>
    </source>
</reference>
<reference key="2">
    <citation type="submission" date="2007-10" db="UniProtKB">
        <title>Shotgun proteomic analysis of total and membrane protein extracts of S. aureus strain N315.</title>
        <authorList>
            <person name="Vaezzadeh A.R."/>
            <person name="Deshusses J."/>
            <person name="Lescuyer P."/>
            <person name="Hochstrasser D.F."/>
        </authorList>
    </citation>
    <scope>IDENTIFICATION BY MASS SPECTROMETRY [LARGE SCALE ANALYSIS]</scope>
    <source>
        <strain>N315</strain>
    </source>
</reference>
<dbReference type="EC" id="3.6.1.-" evidence="1"/>
<dbReference type="EMBL" id="BA000018">
    <property type="protein sequence ID" value="BAB42316.1"/>
    <property type="molecule type" value="Genomic_DNA"/>
</dbReference>
<dbReference type="PIR" id="H89894">
    <property type="entry name" value="H89894"/>
</dbReference>
<dbReference type="RefSeq" id="WP_000847936.1">
    <property type="nucleotide sequence ID" value="NC_002745.2"/>
</dbReference>
<dbReference type="PDB" id="6ZHL">
    <property type="method" value="X-ray"/>
    <property type="resolution" value="1.94 A"/>
    <property type="chains" value="A=8-291"/>
</dbReference>
<dbReference type="PDB" id="6ZHM">
    <property type="method" value="X-ray"/>
    <property type="resolution" value="2.15 A"/>
    <property type="chains" value="A=8-291"/>
</dbReference>
<dbReference type="PDBsum" id="6ZHL"/>
<dbReference type="PDBsum" id="6ZHM"/>
<dbReference type="SMR" id="P67682"/>
<dbReference type="EnsemblBacteria" id="BAB42316">
    <property type="protein sequence ID" value="BAB42316"/>
    <property type="gene ID" value="BAB42316"/>
</dbReference>
<dbReference type="KEGG" id="sau:SA1064"/>
<dbReference type="HOGENOM" id="CLU_033617_2_1_9"/>
<dbReference type="GO" id="GO:0005737">
    <property type="term" value="C:cytoplasm"/>
    <property type="evidence" value="ECO:0007669"/>
    <property type="project" value="UniProtKB-SubCell"/>
</dbReference>
<dbReference type="GO" id="GO:0005525">
    <property type="term" value="F:GTP binding"/>
    <property type="evidence" value="ECO:0007669"/>
    <property type="project" value="UniProtKB-UniRule"/>
</dbReference>
<dbReference type="GO" id="GO:0003924">
    <property type="term" value="F:GTPase activity"/>
    <property type="evidence" value="ECO:0007669"/>
    <property type="project" value="UniProtKB-UniRule"/>
</dbReference>
<dbReference type="GO" id="GO:0046872">
    <property type="term" value="F:metal ion binding"/>
    <property type="evidence" value="ECO:0007669"/>
    <property type="project" value="UniProtKB-KW"/>
</dbReference>
<dbReference type="GO" id="GO:0019843">
    <property type="term" value="F:rRNA binding"/>
    <property type="evidence" value="ECO:0007669"/>
    <property type="project" value="UniProtKB-KW"/>
</dbReference>
<dbReference type="GO" id="GO:0042274">
    <property type="term" value="P:ribosomal small subunit biogenesis"/>
    <property type="evidence" value="ECO:0007669"/>
    <property type="project" value="UniProtKB-UniRule"/>
</dbReference>
<dbReference type="CDD" id="cd04466">
    <property type="entry name" value="S1_YloQ_GTPase"/>
    <property type="match status" value="1"/>
</dbReference>
<dbReference type="CDD" id="cd01854">
    <property type="entry name" value="YjeQ_EngC"/>
    <property type="match status" value="1"/>
</dbReference>
<dbReference type="Gene3D" id="2.40.50.140">
    <property type="entry name" value="Nucleic acid-binding proteins"/>
    <property type="match status" value="1"/>
</dbReference>
<dbReference type="Gene3D" id="3.40.50.300">
    <property type="entry name" value="P-loop containing nucleotide triphosphate hydrolases"/>
    <property type="match status" value="1"/>
</dbReference>
<dbReference type="Gene3D" id="1.10.40.50">
    <property type="entry name" value="Probable gtpase engc, domain 3"/>
    <property type="match status" value="1"/>
</dbReference>
<dbReference type="HAMAP" id="MF_01820">
    <property type="entry name" value="GTPase_RsgA"/>
    <property type="match status" value="1"/>
</dbReference>
<dbReference type="InterPro" id="IPR030378">
    <property type="entry name" value="G_CP_dom"/>
</dbReference>
<dbReference type="InterPro" id="IPR012340">
    <property type="entry name" value="NA-bd_OB-fold"/>
</dbReference>
<dbReference type="InterPro" id="IPR027417">
    <property type="entry name" value="P-loop_NTPase"/>
</dbReference>
<dbReference type="InterPro" id="IPR004881">
    <property type="entry name" value="Ribosome_biogen_GTPase_RsgA"/>
</dbReference>
<dbReference type="InterPro" id="IPR010914">
    <property type="entry name" value="RsgA_GTPase_dom"/>
</dbReference>
<dbReference type="InterPro" id="IPR031944">
    <property type="entry name" value="RsgA_N"/>
</dbReference>
<dbReference type="NCBIfam" id="TIGR00157">
    <property type="entry name" value="ribosome small subunit-dependent GTPase A"/>
    <property type="match status" value="1"/>
</dbReference>
<dbReference type="PANTHER" id="PTHR32120">
    <property type="entry name" value="SMALL RIBOSOMAL SUBUNIT BIOGENESIS GTPASE RSGA"/>
    <property type="match status" value="1"/>
</dbReference>
<dbReference type="PANTHER" id="PTHR32120:SF11">
    <property type="entry name" value="SMALL RIBOSOMAL SUBUNIT BIOGENESIS GTPASE RSGA 1, MITOCHONDRIAL-RELATED"/>
    <property type="match status" value="1"/>
</dbReference>
<dbReference type="Pfam" id="PF03193">
    <property type="entry name" value="RsgA_GTPase"/>
    <property type="match status" value="1"/>
</dbReference>
<dbReference type="Pfam" id="PF16745">
    <property type="entry name" value="RsgA_N"/>
    <property type="match status" value="1"/>
</dbReference>
<dbReference type="SUPFAM" id="SSF50249">
    <property type="entry name" value="Nucleic acid-binding proteins"/>
    <property type="match status" value="1"/>
</dbReference>
<dbReference type="SUPFAM" id="SSF52540">
    <property type="entry name" value="P-loop containing nucleoside triphosphate hydrolases"/>
    <property type="match status" value="1"/>
</dbReference>
<dbReference type="PROSITE" id="PS50936">
    <property type="entry name" value="ENGC_GTPASE"/>
    <property type="match status" value="1"/>
</dbReference>
<dbReference type="PROSITE" id="PS51721">
    <property type="entry name" value="G_CP"/>
    <property type="match status" value="1"/>
</dbReference>
<sequence length="291" mass="33875">MKTGRIVKSISGVYQVDVNGERFNTKPRGLFRKKKFSPVVGDIVEFEVQNINEGYIHQVFERKNELKRPPVSNIDTLVIVMSAVEPNFSTQLLDRFLVIAHSYQLNARVLVTKKDKTPIEKQFEINELLKIYENIGYETEFIGNDDDRKKIVEAWPAGLIVLSGQSGVGKSTFLNHYRPELNLETNDISKSLNRGKHTTRHVELFERQNGYIADTPGFSALDFDHIDKDEIKDYFLELNRYGETCKFRNCNHIKEPNCNVKHQLEIGNIAQFRYDHYLQLFNEISNRKVRY</sequence>
<evidence type="ECO:0000255" key="1">
    <source>
        <dbReference type="HAMAP-Rule" id="MF_01820"/>
    </source>
</evidence>
<evidence type="ECO:0000255" key="2">
    <source>
        <dbReference type="PROSITE-ProRule" id="PRU01058"/>
    </source>
</evidence>
<name>RSGA_STAAN</name>
<proteinExistence type="evidence at protein level"/>
<protein>
    <recommendedName>
        <fullName evidence="1">Small ribosomal subunit biogenesis GTPase RsgA</fullName>
        <ecNumber evidence="1">3.6.1.-</ecNumber>
    </recommendedName>
</protein>
<keyword id="KW-0002">3D-structure</keyword>
<keyword id="KW-0963">Cytoplasm</keyword>
<keyword id="KW-0342">GTP-binding</keyword>
<keyword id="KW-0378">Hydrolase</keyword>
<keyword id="KW-0479">Metal-binding</keyword>
<keyword id="KW-0547">Nucleotide-binding</keyword>
<keyword id="KW-0690">Ribosome biogenesis</keyword>
<keyword id="KW-0694">RNA-binding</keyword>
<keyword id="KW-0699">rRNA-binding</keyword>
<keyword id="KW-0862">Zinc</keyword>
<comment type="function">
    <text evidence="1">One of several proteins that assist in the late maturation steps of the functional core of the 30S ribosomal subunit. Helps release RbfA from mature subunits. May play a role in the assembly of ribosomal proteins into the subunit. Circularly permuted GTPase that catalyzes slow GTP hydrolysis, GTPase activity is stimulated by the 30S ribosomal subunit.</text>
</comment>
<comment type="cofactor">
    <cofactor evidence="1">
        <name>Zn(2+)</name>
        <dbReference type="ChEBI" id="CHEBI:29105"/>
    </cofactor>
    <text evidence="1">Binds 1 zinc ion per subunit.</text>
</comment>
<comment type="subunit">
    <text evidence="1">Monomer. Associates with 30S ribosomal subunit, binds 16S rRNA.</text>
</comment>
<comment type="subcellular location">
    <subcellularLocation>
        <location evidence="1">Cytoplasm</location>
    </subcellularLocation>
</comment>
<comment type="similarity">
    <text evidence="1">Belongs to the TRAFAC class YlqF/YawG GTPase family. RsgA subfamily.</text>
</comment>